<feature type="chain" id="PRO_1000133936" description="Betaine aldehyde dehydrogenase">
    <location>
        <begin position="1"/>
        <end position="490"/>
    </location>
</feature>
<feature type="active site" description="Charge relay system" evidence="1">
    <location>
        <position position="162"/>
    </location>
</feature>
<feature type="active site" description="Proton acceptor" evidence="1">
    <location>
        <position position="252"/>
    </location>
</feature>
<feature type="active site" description="Nucleophile" evidence="1">
    <location>
        <position position="286"/>
    </location>
</feature>
<feature type="active site" description="Charge relay system" evidence="1">
    <location>
        <position position="464"/>
    </location>
</feature>
<feature type="binding site" evidence="1">
    <location>
        <position position="26"/>
    </location>
    <ligand>
        <name>K(+)</name>
        <dbReference type="ChEBI" id="CHEBI:29103"/>
        <label>1</label>
    </ligand>
</feature>
<feature type="binding site" evidence="1">
    <location>
        <position position="27"/>
    </location>
    <ligand>
        <name>K(+)</name>
        <dbReference type="ChEBI" id="CHEBI:29103"/>
        <label>1</label>
    </ligand>
</feature>
<feature type="binding site" evidence="1">
    <location>
        <position position="93"/>
    </location>
    <ligand>
        <name>K(+)</name>
        <dbReference type="ChEBI" id="CHEBI:29103"/>
        <label>1</label>
    </ligand>
</feature>
<feature type="binding site" evidence="1">
    <location>
        <begin position="150"/>
        <end position="152"/>
    </location>
    <ligand>
        <name>NAD(+)</name>
        <dbReference type="ChEBI" id="CHEBI:57540"/>
    </ligand>
</feature>
<feature type="binding site" evidence="1">
    <location>
        <begin position="176"/>
        <end position="179"/>
    </location>
    <ligand>
        <name>NAD(+)</name>
        <dbReference type="ChEBI" id="CHEBI:57540"/>
    </ligand>
</feature>
<feature type="binding site" evidence="1">
    <location>
        <begin position="230"/>
        <end position="233"/>
    </location>
    <ligand>
        <name>NAD(+)</name>
        <dbReference type="ChEBI" id="CHEBI:57540"/>
    </ligand>
</feature>
<feature type="binding site" evidence="1">
    <location>
        <position position="246"/>
    </location>
    <ligand>
        <name>K(+)</name>
        <dbReference type="ChEBI" id="CHEBI:29103"/>
        <label>2</label>
    </ligand>
</feature>
<feature type="binding site" evidence="1">
    <location>
        <position position="254"/>
    </location>
    <ligand>
        <name>NAD(+)</name>
        <dbReference type="ChEBI" id="CHEBI:57540"/>
    </ligand>
</feature>
<feature type="binding site" description="covalent" evidence="1">
    <location>
        <position position="286"/>
    </location>
    <ligand>
        <name>NAD(+)</name>
        <dbReference type="ChEBI" id="CHEBI:57540"/>
    </ligand>
</feature>
<feature type="binding site" evidence="1">
    <location>
        <position position="387"/>
    </location>
    <ligand>
        <name>NAD(+)</name>
        <dbReference type="ChEBI" id="CHEBI:57540"/>
    </ligand>
</feature>
<feature type="binding site" evidence="1">
    <location>
        <position position="457"/>
    </location>
    <ligand>
        <name>K(+)</name>
        <dbReference type="ChEBI" id="CHEBI:29103"/>
        <label>2</label>
    </ligand>
</feature>
<feature type="binding site" evidence="1">
    <location>
        <position position="460"/>
    </location>
    <ligand>
        <name>K(+)</name>
        <dbReference type="ChEBI" id="CHEBI:29103"/>
        <label>2</label>
    </ligand>
</feature>
<feature type="site" description="Seems to be a necessary countercharge to the potassium cations" evidence="1">
    <location>
        <position position="248"/>
    </location>
</feature>
<feature type="modified residue" description="Cysteine sulfenic acid (-SOH)" evidence="1">
    <location>
        <position position="286"/>
    </location>
</feature>
<accession>B0VST2</accession>
<comment type="function">
    <text evidence="1">Involved in the biosynthesis of the osmoprotectant glycine betaine. Catalyzes the irreversible oxidation of betaine aldehyde to the corresponding acid.</text>
</comment>
<comment type="catalytic activity">
    <reaction evidence="1">
        <text>betaine aldehyde + NAD(+) + H2O = glycine betaine + NADH + 2 H(+)</text>
        <dbReference type="Rhea" id="RHEA:15305"/>
        <dbReference type="ChEBI" id="CHEBI:15377"/>
        <dbReference type="ChEBI" id="CHEBI:15378"/>
        <dbReference type="ChEBI" id="CHEBI:15710"/>
        <dbReference type="ChEBI" id="CHEBI:17750"/>
        <dbReference type="ChEBI" id="CHEBI:57540"/>
        <dbReference type="ChEBI" id="CHEBI:57945"/>
        <dbReference type="EC" id="1.2.1.8"/>
    </reaction>
    <physiologicalReaction direction="left-to-right" evidence="1">
        <dbReference type="Rhea" id="RHEA:15306"/>
    </physiologicalReaction>
</comment>
<comment type="cofactor">
    <cofactor evidence="1">
        <name>K(+)</name>
        <dbReference type="ChEBI" id="CHEBI:29103"/>
    </cofactor>
    <text evidence="1">Binds 2 potassium ions per subunit.</text>
</comment>
<comment type="pathway">
    <text evidence="1">Amine and polyamine biosynthesis; betaine biosynthesis via choline pathway; betaine from betaine aldehyde: step 1/1.</text>
</comment>
<comment type="subunit">
    <text evidence="1">Dimer of dimers.</text>
</comment>
<comment type="similarity">
    <text evidence="1">Belongs to the aldehyde dehydrogenase family.</text>
</comment>
<dbReference type="EC" id="1.2.1.8" evidence="1"/>
<dbReference type="EMBL" id="CU468230">
    <property type="protein sequence ID" value="CAP01750.1"/>
    <property type="molecule type" value="Genomic_DNA"/>
</dbReference>
<dbReference type="SMR" id="B0VST2"/>
<dbReference type="KEGG" id="abm:ABSDF2439"/>
<dbReference type="HOGENOM" id="CLU_005391_0_0_6"/>
<dbReference type="UniPathway" id="UPA00529">
    <property type="reaction ID" value="UER00386"/>
</dbReference>
<dbReference type="Proteomes" id="UP000001741">
    <property type="component" value="Chromosome"/>
</dbReference>
<dbReference type="GO" id="GO:0008802">
    <property type="term" value="F:betaine-aldehyde dehydrogenase (NAD+) activity"/>
    <property type="evidence" value="ECO:0007669"/>
    <property type="project" value="UniProtKB-UniRule"/>
</dbReference>
<dbReference type="GO" id="GO:0046872">
    <property type="term" value="F:metal ion binding"/>
    <property type="evidence" value="ECO:0007669"/>
    <property type="project" value="UniProtKB-KW"/>
</dbReference>
<dbReference type="GO" id="GO:0019285">
    <property type="term" value="P:glycine betaine biosynthetic process from choline"/>
    <property type="evidence" value="ECO:0007669"/>
    <property type="project" value="UniProtKB-UniRule"/>
</dbReference>
<dbReference type="CDD" id="cd07090">
    <property type="entry name" value="ALDH_F9_TMBADH"/>
    <property type="match status" value="1"/>
</dbReference>
<dbReference type="FunFam" id="3.40.309.10:FF:000014">
    <property type="entry name" value="NAD/NADP-dependent betaine aldehyde dehydrogenase"/>
    <property type="match status" value="1"/>
</dbReference>
<dbReference type="FunFam" id="3.40.605.10:FF:000007">
    <property type="entry name" value="NAD/NADP-dependent betaine aldehyde dehydrogenase"/>
    <property type="match status" value="1"/>
</dbReference>
<dbReference type="Gene3D" id="3.40.605.10">
    <property type="entry name" value="Aldehyde Dehydrogenase, Chain A, domain 1"/>
    <property type="match status" value="1"/>
</dbReference>
<dbReference type="Gene3D" id="3.40.309.10">
    <property type="entry name" value="Aldehyde Dehydrogenase, Chain A, domain 2"/>
    <property type="match status" value="1"/>
</dbReference>
<dbReference type="HAMAP" id="MF_00804">
    <property type="entry name" value="BADH"/>
    <property type="match status" value="1"/>
</dbReference>
<dbReference type="InterPro" id="IPR016161">
    <property type="entry name" value="Ald_DH/histidinol_DH"/>
</dbReference>
<dbReference type="InterPro" id="IPR016163">
    <property type="entry name" value="Ald_DH_C"/>
</dbReference>
<dbReference type="InterPro" id="IPR016160">
    <property type="entry name" value="Ald_DH_CS_CYS"/>
</dbReference>
<dbReference type="InterPro" id="IPR029510">
    <property type="entry name" value="Ald_DH_CS_GLU"/>
</dbReference>
<dbReference type="InterPro" id="IPR016162">
    <property type="entry name" value="Ald_DH_N"/>
</dbReference>
<dbReference type="InterPro" id="IPR015590">
    <property type="entry name" value="Aldehyde_DH_dom"/>
</dbReference>
<dbReference type="InterPro" id="IPR011264">
    <property type="entry name" value="BADH"/>
</dbReference>
<dbReference type="NCBIfam" id="TIGR01804">
    <property type="entry name" value="BADH"/>
    <property type="match status" value="1"/>
</dbReference>
<dbReference type="NCBIfam" id="NF009725">
    <property type="entry name" value="PRK13252.1"/>
    <property type="match status" value="1"/>
</dbReference>
<dbReference type="PANTHER" id="PTHR11699">
    <property type="entry name" value="ALDEHYDE DEHYDROGENASE-RELATED"/>
    <property type="match status" value="1"/>
</dbReference>
<dbReference type="Pfam" id="PF00171">
    <property type="entry name" value="Aldedh"/>
    <property type="match status" value="1"/>
</dbReference>
<dbReference type="SUPFAM" id="SSF53720">
    <property type="entry name" value="ALDH-like"/>
    <property type="match status" value="1"/>
</dbReference>
<dbReference type="PROSITE" id="PS00070">
    <property type="entry name" value="ALDEHYDE_DEHYDR_CYS"/>
    <property type="match status" value="1"/>
</dbReference>
<dbReference type="PROSITE" id="PS00687">
    <property type="entry name" value="ALDEHYDE_DEHYDR_GLU"/>
    <property type="match status" value="1"/>
</dbReference>
<reference key="1">
    <citation type="journal article" date="2008" name="PLoS ONE">
        <title>Comparative analysis of Acinetobacters: three genomes for three lifestyles.</title>
        <authorList>
            <person name="Vallenet D."/>
            <person name="Nordmann P."/>
            <person name="Barbe V."/>
            <person name="Poirel L."/>
            <person name="Mangenot S."/>
            <person name="Bataille E."/>
            <person name="Dossat C."/>
            <person name="Gas S."/>
            <person name="Kreimeyer A."/>
            <person name="Lenoble P."/>
            <person name="Oztas S."/>
            <person name="Poulain J."/>
            <person name="Segurens B."/>
            <person name="Robert C."/>
            <person name="Abergel C."/>
            <person name="Claverie J.-M."/>
            <person name="Raoult D."/>
            <person name="Medigue C."/>
            <person name="Weissenbach J."/>
            <person name="Cruveiller S."/>
        </authorList>
    </citation>
    <scope>NUCLEOTIDE SEQUENCE [LARGE SCALE GENOMIC DNA]</scope>
    <source>
        <strain>SDF</strain>
    </source>
</reference>
<gene>
    <name evidence="1" type="primary">betB</name>
    <name type="ordered locus">ABSDF2439</name>
</gene>
<name>BETB_ACIBS</name>
<sequence>MSDVQVHQLYIHGRYVEATSGKTFNSINPANGEIIATLQQASEQDIEAAVKSAQQGQKIWAAMTAMERSRILRRAVDILRERNDELARLETLDTGKAYSETSTVDIVTGADVLEYYAGLATAIQGEQVPLRESSFFYTRREPLGVVAGIGAWNYPIQIALWKSAPALAAGNAMIFKPSETTPLTALKLAEIYTEAGLPDGVFNVVQGAGREIGQWLTEHPVIEKISFTGGVETGKKVMASAAGSTLKEVTMELGGKSPLIICEDADLNRAADIAVMANFFSSGQVCTNGTRVFVPKSRLADFEKAVVERVKRILIGDPMAEDTNFGPLTSFPHMEKVLSFIESGKQQGAKVLIGGGRATEGELAKGAYVLPTVFSDCTDQMAIVQEEIFGPVMSILGYETEEEVIQRANDTTFGLAAGVVTQDISRAHRIIHQIEAGICWINTWGESPAEMPVGGYKQSGVGRENGLTTLGHYTRIKSIQVELGDYQGIF</sequence>
<protein>
    <recommendedName>
        <fullName evidence="1">Betaine aldehyde dehydrogenase</fullName>
        <shortName evidence="1">BADH</shortName>
        <ecNumber evidence="1">1.2.1.8</ecNumber>
    </recommendedName>
</protein>
<evidence type="ECO:0000255" key="1">
    <source>
        <dbReference type="HAMAP-Rule" id="MF_00804"/>
    </source>
</evidence>
<organism>
    <name type="scientific">Acinetobacter baumannii (strain SDF)</name>
    <dbReference type="NCBI Taxonomy" id="509170"/>
    <lineage>
        <taxon>Bacteria</taxon>
        <taxon>Pseudomonadati</taxon>
        <taxon>Pseudomonadota</taxon>
        <taxon>Gammaproteobacteria</taxon>
        <taxon>Moraxellales</taxon>
        <taxon>Moraxellaceae</taxon>
        <taxon>Acinetobacter</taxon>
        <taxon>Acinetobacter calcoaceticus/baumannii complex</taxon>
    </lineage>
</organism>
<keyword id="KW-0479">Metal-binding</keyword>
<keyword id="KW-0520">NAD</keyword>
<keyword id="KW-0521">NADP</keyword>
<keyword id="KW-0558">Oxidation</keyword>
<keyword id="KW-0560">Oxidoreductase</keyword>
<keyword id="KW-0630">Potassium</keyword>
<proteinExistence type="inferred from homology"/>